<comment type="function">
    <text>Lysozymes have primarily a bacteriolytic function; those in tissues and body fluids are associated with the monocyte-macrophage system and enhance the activity of immunoagents.</text>
</comment>
<comment type="catalytic activity">
    <reaction>
        <text>Hydrolysis of (1-&gt;4)-beta-linkages between N-acetylmuramic acid and N-acetyl-D-glucosamine residues in a peptidoglycan and between N-acetyl-D-glucosamine residues in chitodextrins.</text>
        <dbReference type="EC" id="3.2.1.17"/>
    </reaction>
</comment>
<comment type="subunit">
    <text>Monomer.</text>
</comment>
<comment type="subcellular location">
    <subcellularLocation>
        <location evidence="1">Secreted</location>
    </subcellularLocation>
</comment>
<comment type="tissue specificity">
    <text>Expressed in stomach.</text>
</comment>
<comment type="miscellaneous">
    <text>Lysozyme C is capable of both hydrolysis and transglycosylation; it also shows a slight esterase activity. It acts rapidly on both peptide-substituted and unsubstituted peptidoglycan, and slowly on chitin oligosaccharides.</text>
</comment>
<comment type="similarity">
    <text evidence="2">Belongs to the glycosyl hydrolase 22 family.</text>
</comment>
<sequence>MKALVILGLLFLSVAVQGKVFERCELARTLKKLGLDDYKGVSLANWLCLSKWESGYNTKATNYNPGSESTDYGIFQINSKWWCNDGKTPNAVDGCHVSCSALMENDIEKAVACAKHIVSEQGITAWVAWKSHCRVHDVSSYVEGCKL</sequence>
<name>LYSC3_SHEEP</name>
<organism>
    <name type="scientific">Ovis aries</name>
    <name type="common">Sheep</name>
    <dbReference type="NCBI Taxonomy" id="9940"/>
    <lineage>
        <taxon>Eukaryota</taxon>
        <taxon>Metazoa</taxon>
        <taxon>Chordata</taxon>
        <taxon>Craniata</taxon>
        <taxon>Vertebrata</taxon>
        <taxon>Euteleostomi</taxon>
        <taxon>Mammalia</taxon>
        <taxon>Eutheria</taxon>
        <taxon>Laurasiatheria</taxon>
        <taxon>Artiodactyla</taxon>
        <taxon>Ruminantia</taxon>
        <taxon>Pecora</taxon>
        <taxon>Bovidae</taxon>
        <taxon>Caprinae</taxon>
        <taxon>Ovis</taxon>
    </lineage>
</organism>
<feature type="signal peptide" evidence="1">
    <location>
        <begin position="1"/>
        <end position="18"/>
    </location>
</feature>
<feature type="chain" id="PRO_0000018489" description="Lysozyme C-3">
    <location>
        <begin position="19"/>
        <end position="147"/>
    </location>
</feature>
<feature type="domain" description="C-type lysozyme" evidence="2">
    <location>
        <begin position="19"/>
        <end position="147"/>
    </location>
</feature>
<feature type="active site" evidence="2">
    <location>
        <position position="53"/>
    </location>
</feature>
<feature type="active site" evidence="2">
    <location>
        <position position="71"/>
    </location>
</feature>
<feature type="disulfide bond" evidence="2">
    <location>
        <begin position="24"/>
        <end position="145"/>
    </location>
</feature>
<feature type="disulfide bond" evidence="2">
    <location>
        <begin position="48"/>
        <end position="133"/>
    </location>
</feature>
<feature type="disulfide bond" evidence="2">
    <location>
        <begin position="83"/>
        <end position="99"/>
    </location>
</feature>
<feature type="disulfide bond" evidence="2">
    <location>
        <begin position="95"/>
        <end position="113"/>
    </location>
</feature>
<evidence type="ECO:0000250" key="1"/>
<evidence type="ECO:0000255" key="2">
    <source>
        <dbReference type="PROSITE-ProRule" id="PRU00680"/>
    </source>
</evidence>
<dbReference type="EC" id="3.2.1.17"/>
<dbReference type="EMBL" id="AF170559">
    <property type="protein sequence ID" value="AAD51637.1"/>
    <property type="molecule type" value="Genomic_DNA"/>
</dbReference>
<dbReference type="EMBL" id="AF170556">
    <property type="protein sequence ID" value="AAD51637.1"/>
    <property type="status" value="JOINED"/>
    <property type="molecule type" value="Genomic_DNA"/>
</dbReference>
<dbReference type="EMBL" id="AF170557">
    <property type="protein sequence ID" value="AAD51637.1"/>
    <property type="status" value="JOINED"/>
    <property type="molecule type" value="Genomic_DNA"/>
</dbReference>
<dbReference type="EMBL" id="AF170558">
    <property type="protein sequence ID" value="AAD51637.1"/>
    <property type="status" value="JOINED"/>
    <property type="molecule type" value="Genomic_DNA"/>
</dbReference>
<dbReference type="SMR" id="Q9TUN1"/>
<dbReference type="STRING" id="9940.ENSOARP00000021953"/>
<dbReference type="CAZy" id="GH22">
    <property type="family name" value="Glycoside Hydrolase Family 22"/>
</dbReference>
<dbReference type="PaxDb" id="9940-ENSOARP00000021953"/>
<dbReference type="eggNOG" id="ENOG502S4CB">
    <property type="taxonomic scope" value="Eukaryota"/>
</dbReference>
<dbReference type="Proteomes" id="UP000002356">
    <property type="component" value="Unplaced"/>
</dbReference>
<dbReference type="GO" id="GO:0005576">
    <property type="term" value="C:extracellular region"/>
    <property type="evidence" value="ECO:0007669"/>
    <property type="project" value="UniProtKB-SubCell"/>
</dbReference>
<dbReference type="GO" id="GO:0003796">
    <property type="term" value="F:lysozyme activity"/>
    <property type="evidence" value="ECO:0007669"/>
    <property type="project" value="UniProtKB-EC"/>
</dbReference>
<dbReference type="GO" id="GO:0050829">
    <property type="term" value="P:defense response to Gram-negative bacterium"/>
    <property type="evidence" value="ECO:0007669"/>
    <property type="project" value="TreeGrafter"/>
</dbReference>
<dbReference type="GO" id="GO:0050830">
    <property type="term" value="P:defense response to Gram-positive bacterium"/>
    <property type="evidence" value="ECO:0007669"/>
    <property type="project" value="TreeGrafter"/>
</dbReference>
<dbReference type="GO" id="GO:0007586">
    <property type="term" value="P:digestion"/>
    <property type="evidence" value="ECO:0007669"/>
    <property type="project" value="UniProtKB-KW"/>
</dbReference>
<dbReference type="GO" id="GO:0031640">
    <property type="term" value="P:killing of cells of another organism"/>
    <property type="evidence" value="ECO:0007669"/>
    <property type="project" value="UniProtKB-KW"/>
</dbReference>
<dbReference type="CDD" id="cd16897">
    <property type="entry name" value="LYZ_C"/>
    <property type="match status" value="1"/>
</dbReference>
<dbReference type="FunFam" id="1.10.530.10:FF:000001">
    <property type="entry name" value="Lysozyme C"/>
    <property type="match status" value="1"/>
</dbReference>
<dbReference type="Gene3D" id="1.10.530.10">
    <property type="match status" value="1"/>
</dbReference>
<dbReference type="InterPro" id="IPR001916">
    <property type="entry name" value="Glyco_hydro_22"/>
</dbReference>
<dbReference type="InterPro" id="IPR019799">
    <property type="entry name" value="Glyco_hydro_22_CS"/>
</dbReference>
<dbReference type="InterPro" id="IPR000974">
    <property type="entry name" value="Glyco_hydro_22_lys"/>
</dbReference>
<dbReference type="InterPro" id="IPR023346">
    <property type="entry name" value="Lysozyme-like_dom_sf"/>
</dbReference>
<dbReference type="PANTHER" id="PTHR11407">
    <property type="entry name" value="LYSOZYME C"/>
    <property type="match status" value="1"/>
</dbReference>
<dbReference type="PANTHER" id="PTHR11407:SF28">
    <property type="entry name" value="LYSOZYME C"/>
    <property type="match status" value="1"/>
</dbReference>
<dbReference type="Pfam" id="PF00062">
    <property type="entry name" value="Lys"/>
    <property type="match status" value="1"/>
</dbReference>
<dbReference type="PRINTS" id="PR00137">
    <property type="entry name" value="LYSOZYME"/>
</dbReference>
<dbReference type="PRINTS" id="PR00135">
    <property type="entry name" value="LYZLACT"/>
</dbReference>
<dbReference type="SMART" id="SM00263">
    <property type="entry name" value="LYZ1"/>
    <property type="match status" value="1"/>
</dbReference>
<dbReference type="SUPFAM" id="SSF53955">
    <property type="entry name" value="Lysozyme-like"/>
    <property type="match status" value="1"/>
</dbReference>
<dbReference type="PROSITE" id="PS00128">
    <property type="entry name" value="GLYCOSYL_HYDROL_F22_1"/>
    <property type="match status" value="1"/>
</dbReference>
<dbReference type="PROSITE" id="PS51348">
    <property type="entry name" value="GLYCOSYL_HYDROL_F22_2"/>
    <property type="match status" value="1"/>
</dbReference>
<accession>Q9TUN1</accession>
<keyword id="KW-0929">Antimicrobial</keyword>
<keyword id="KW-0081">Bacteriolytic enzyme</keyword>
<keyword id="KW-0222">Digestion</keyword>
<keyword id="KW-1015">Disulfide bond</keyword>
<keyword id="KW-0326">Glycosidase</keyword>
<keyword id="KW-0378">Hydrolase</keyword>
<keyword id="KW-1185">Reference proteome</keyword>
<keyword id="KW-0964">Secreted</keyword>
<keyword id="KW-0732">Signal</keyword>
<proteinExistence type="evidence at transcript level"/>
<protein>
    <recommendedName>
        <fullName>Lysozyme C-3</fullName>
        <ecNumber>3.2.1.17</ecNumber>
    </recommendedName>
    <alternativeName>
        <fullName>1,4-beta-N-acetylmuramidase C</fullName>
    </alternativeName>
</protein>
<reference key="1">
    <citation type="journal article" date="1999" name="Mol. Phylogenet. Evol.">
        <title>Mosaic evolution of ruminant stomach lysozyme genes.</title>
        <authorList>
            <person name="Wen Y."/>
            <person name="Irwin D.M."/>
        </authorList>
    </citation>
    <scope>NUCLEOTIDE SEQUENCE [GENOMIC DNA]</scope>
</reference>